<comment type="similarity">
    <text evidence="2">Belongs to the bacterial ribosomal protein bS21 family.</text>
</comment>
<accession>Q3YXH8</accession>
<feature type="initiator methionine" description="Removed" evidence="1">
    <location>
        <position position="1"/>
    </location>
</feature>
<feature type="chain" id="PRO_0000266766" description="Small ribosomal subunit protein bS21">
    <location>
        <begin position="2"/>
        <end position="71"/>
    </location>
</feature>
<feature type="region of interest" description="Disordered" evidence="3">
    <location>
        <begin position="43"/>
        <end position="71"/>
    </location>
</feature>
<feature type="compositionally biased region" description="Basic residues" evidence="3">
    <location>
        <begin position="46"/>
        <end position="59"/>
    </location>
</feature>
<feature type="compositionally biased region" description="Basic and acidic residues" evidence="3">
    <location>
        <begin position="60"/>
        <end position="71"/>
    </location>
</feature>
<keyword id="KW-1185">Reference proteome</keyword>
<keyword id="KW-0687">Ribonucleoprotein</keyword>
<keyword id="KW-0689">Ribosomal protein</keyword>
<dbReference type="EMBL" id="CP000038">
    <property type="protein sequence ID" value="AAZ89784.1"/>
    <property type="molecule type" value="Genomic_DNA"/>
</dbReference>
<dbReference type="RefSeq" id="WP_001144069.1">
    <property type="nucleotide sequence ID" value="NC_007384.1"/>
</dbReference>
<dbReference type="SMR" id="Q3YXH8"/>
<dbReference type="GeneID" id="98390195"/>
<dbReference type="KEGG" id="ssn:SSON_3202"/>
<dbReference type="HOGENOM" id="CLU_159258_1_0_6"/>
<dbReference type="Proteomes" id="UP000002529">
    <property type="component" value="Chromosome"/>
</dbReference>
<dbReference type="GO" id="GO:1990904">
    <property type="term" value="C:ribonucleoprotein complex"/>
    <property type="evidence" value="ECO:0007669"/>
    <property type="project" value="UniProtKB-KW"/>
</dbReference>
<dbReference type="GO" id="GO:0005840">
    <property type="term" value="C:ribosome"/>
    <property type="evidence" value="ECO:0007669"/>
    <property type="project" value="UniProtKB-KW"/>
</dbReference>
<dbReference type="GO" id="GO:0003735">
    <property type="term" value="F:structural constituent of ribosome"/>
    <property type="evidence" value="ECO:0007669"/>
    <property type="project" value="InterPro"/>
</dbReference>
<dbReference type="GO" id="GO:0006412">
    <property type="term" value="P:translation"/>
    <property type="evidence" value="ECO:0007669"/>
    <property type="project" value="UniProtKB-UniRule"/>
</dbReference>
<dbReference type="FunFam" id="1.20.5.1150:FF:000001">
    <property type="entry name" value="30S ribosomal protein S21"/>
    <property type="match status" value="1"/>
</dbReference>
<dbReference type="Gene3D" id="1.20.5.1150">
    <property type="entry name" value="Ribosomal protein S8"/>
    <property type="match status" value="1"/>
</dbReference>
<dbReference type="HAMAP" id="MF_00358">
    <property type="entry name" value="Ribosomal_bS21"/>
    <property type="match status" value="1"/>
</dbReference>
<dbReference type="InterPro" id="IPR001911">
    <property type="entry name" value="Ribosomal_bS21"/>
</dbReference>
<dbReference type="InterPro" id="IPR018278">
    <property type="entry name" value="Ribosomal_bS21_CS"/>
</dbReference>
<dbReference type="InterPro" id="IPR038380">
    <property type="entry name" value="Ribosomal_bS21_sf"/>
</dbReference>
<dbReference type="NCBIfam" id="TIGR00030">
    <property type="entry name" value="S21p"/>
    <property type="match status" value="1"/>
</dbReference>
<dbReference type="PANTHER" id="PTHR21109">
    <property type="entry name" value="MITOCHONDRIAL 28S RIBOSOMAL PROTEIN S21"/>
    <property type="match status" value="1"/>
</dbReference>
<dbReference type="PANTHER" id="PTHR21109:SF22">
    <property type="entry name" value="SMALL RIBOSOMAL SUBUNIT PROTEIN BS21"/>
    <property type="match status" value="1"/>
</dbReference>
<dbReference type="Pfam" id="PF01165">
    <property type="entry name" value="Ribosomal_S21"/>
    <property type="match status" value="1"/>
</dbReference>
<dbReference type="PRINTS" id="PR00976">
    <property type="entry name" value="RIBOSOMALS21"/>
</dbReference>
<dbReference type="PROSITE" id="PS01181">
    <property type="entry name" value="RIBOSOMAL_S21"/>
    <property type="match status" value="1"/>
</dbReference>
<organism>
    <name type="scientific">Shigella sonnei (strain Ss046)</name>
    <dbReference type="NCBI Taxonomy" id="300269"/>
    <lineage>
        <taxon>Bacteria</taxon>
        <taxon>Pseudomonadati</taxon>
        <taxon>Pseudomonadota</taxon>
        <taxon>Gammaproteobacteria</taxon>
        <taxon>Enterobacterales</taxon>
        <taxon>Enterobacteriaceae</taxon>
        <taxon>Shigella</taxon>
    </lineage>
</organism>
<proteinExistence type="inferred from homology"/>
<reference key="1">
    <citation type="journal article" date="2005" name="Nucleic Acids Res.">
        <title>Genome dynamics and diversity of Shigella species, the etiologic agents of bacillary dysentery.</title>
        <authorList>
            <person name="Yang F."/>
            <person name="Yang J."/>
            <person name="Zhang X."/>
            <person name="Chen L."/>
            <person name="Jiang Y."/>
            <person name="Yan Y."/>
            <person name="Tang X."/>
            <person name="Wang J."/>
            <person name="Xiong Z."/>
            <person name="Dong J."/>
            <person name="Xue Y."/>
            <person name="Zhu Y."/>
            <person name="Xu X."/>
            <person name="Sun L."/>
            <person name="Chen S."/>
            <person name="Nie H."/>
            <person name="Peng J."/>
            <person name="Xu J."/>
            <person name="Wang Y."/>
            <person name="Yuan Z."/>
            <person name="Wen Y."/>
            <person name="Yao Z."/>
            <person name="Shen Y."/>
            <person name="Qiang B."/>
            <person name="Hou Y."/>
            <person name="Yu J."/>
            <person name="Jin Q."/>
        </authorList>
    </citation>
    <scope>NUCLEOTIDE SEQUENCE [LARGE SCALE GENOMIC DNA]</scope>
    <source>
        <strain>Ss046</strain>
    </source>
</reference>
<protein>
    <recommendedName>
        <fullName evidence="2">Small ribosomal subunit protein bS21</fullName>
    </recommendedName>
    <alternativeName>
        <fullName evidence="4">30S ribosomal protein S21</fullName>
    </alternativeName>
</protein>
<name>RS21_SHISS</name>
<gene>
    <name evidence="2" type="primary">rpsU</name>
    <name type="ordered locus">SSON_3202</name>
</gene>
<sequence length="71" mass="8500">MPVIKVRENEPFDVALRRFKRSCEKAGVLAEVRRREFYEKPTTERKRAKASAVKRHAKKLARENARRTRLY</sequence>
<evidence type="ECO:0000250" key="1"/>
<evidence type="ECO:0000255" key="2">
    <source>
        <dbReference type="HAMAP-Rule" id="MF_00358"/>
    </source>
</evidence>
<evidence type="ECO:0000256" key="3">
    <source>
        <dbReference type="SAM" id="MobiDB-lite"/>
    </source>
</evidence>
<evidence type="ECO:0000305" key="4"/>